<gene>
    <name evidence="1" type="primary">murC</name>
    <name type="ordered locus">E2348C_0096</name>
</gene>
<keyword id="KW-0067">ATP-binding</keyword>
<keyword id="KW-0131">Cell cycle</keyword>
<keyword id="KW-0132">Cell division</keyword>
<keyword id="KW-0133">Cell shape</keyword>
<keyword id="KW-0961">Cell wall biogenesis/degradation</keyword>
<keyword id="KW-0963">Cytoplasm</keyword>
<keyword id="KW-0436">Ligase</keyword>
<keyword id="KW-0547">Nucleotide-binding</keyword>
<keyword id="KW-0573">Peptidoglycan synthesis</keyword>
<keyword id="KW-1185">Reference proteome</keyword>
<comment type="function">
    <text evidence="1">Cell wall formation.</text>
</comment>
<comment type="catalytic activity">
    <reaction evidence="1">
        <text>UDP-N-acetyl-alpha-D-muramate + L-alanine + ATP = UDP-N-acetyl-alpha-D-muramoyl-L-alanine + ADP + phosphate + H(+)</text>
        <dbReference type="Rhea" id="RHEA:23372"/>
        <dbReference type="ChEBI" id="CHEBI:15378"/>
        <dbReference type="ChEBI" id="CHEBI:30616"/>
        <dbReference type="ChEBI" id="CHEBI:43474"/>
        <dbReference type="ChEBI" id="CHEBI:57972"/>
        <dbReference type="ChEBI" id="CHEBI:70757"/>
        <dbReference type="ChEBI" id="CHEBI:83898"/>
        <dbReference type="ChEBI" id="CHEBI:456216"/>
        <dbReference type="EC" id="6.3.2.8"/>
    </reaction>
</comment>
<comment type="pathway">
    <text evidence="1">Cell wall biogenesis; peptidoglycan biosynthesis.</text>
</comment>
<comment type="subcellular location">
    <subcellularLocation>
        <location evidence="1">Cytoplasm</location>
    </subcellularLocation>
</comment>
<comment type="similarity">
    <text evidence="1">Belongs to the MurCDEF family.</text>
</comment>
<organism>
    <name type="scientific">Escherichia coli O127:H6 (strain E2348/69 / EPEC)</name>
    <dbReference type="NCBI Taxonomy" id="574521"/>
    <lineage>
        <taxon>Bacteria</taxon>
        <taxon>Pseudomonadati</taxon>
        <taxon>Pseudomonadota</taxon>
        <taxon>Gammaproteobacteria</taxon>
        <taxon>Enterobacterales</taxon>
        <taxon>Enterobacteriaceae</taxon>
        <taxon>Escherichia</taxon>
    </lineage>
</organism>
<feature type="chain" id="PRO_1000117411" description="UDP-N-acetylmuramate--L-alanine ligase">
    <location>
        <begin position="1"/>
        <end position="491"/>
    </location>
</feature>
<feature type="binding site" evidence="1">
    <location>
        <begin position="126"/>
        <end position="132"/>
    </location>
    <ligand>
        <name>ATP</name>
        <dbReference type="ChEBI" id="CHEBI:30616"/>
    </ligand>
</feature>
<sequence length="491" mass="53598">MNTQQLAKLRSIVPEMRRVRHIHFVGIGGAGMGGIAEVLANEGYQISGSDLAPNPVTQQLMNLGATIYFNHRPENVRDASVVVVSSAISADNPEIVAAHEARIPVIRRAEMLAELMRFRHGIAIAGTHGKTTTTAMVSSIYAEAGLDPTFVNGGLVKAAGVHARLGHGRYLIAEADESDASFLHLQPMVAIVTNIEADHMDTYQGDFENLKQTFINFLHNLPFYGRAVMCVDDPVIRELLPRVGRQTTTYGFSEDADVRVEDYQQIGPQGHFTLLRQDKEPMRVTLNAPGRHNALNAAAAVAVATEEGIDDEAILRALESFQGTGRRFDFLGEFPLEPVNGKSGTAMLVDDYGHHPTEVDATIKAARAGWPDKNLVMLFQPHRFTRTRDLYDDFANVLTQVDTLLMLEVYPAGEAPIPGADSRSLCRTIRGRGKIDPILVPDPAQVAEMLAPVLTGNDLILVQGAGNIGKIARSLAEIKLKPQTPEEEQHD</sequence>
<reference key="1">
    <citation type="journal article" date="2009" name="J. Bacteriol.">
        <title>Complete genome sequence and comparative genome analysis of enteropathogenic Escherichia coli O127:H6 strain E2348/69.</title>
        <authorList>
            <person name="Iguchi A."/>
            <person name="Thomson N.R."/>
            <person name="Ogura Y."/>
            <person name="Saunders D."/>
            <person name="Ooka T."/>
            <person name="Henderson I.R."/>
            <person name="Harris D."/>
            <person name="Asadulghani M."/>
            <person name="Kurokawa K."/>
            <person name="Dean P."/>
            <person name="Kenny B."/>
            <person name="Quail M.A."/>
            <person name="Thurston S."/>
            <person name="Dougan G."/>
            <person name="Hayashi T."/>
            <person name="Parkhill J."/>
            <person name="Frankel G."/>
        </authorList>
    </citation>
    <scope>NUCLEOTIDE SEQUENCE [LARGE SCALE GENOMIC DNA]</scope>
    <source>
        <strain>E2348/69 / EPEC</strain>
    </source>
</reference>
<name>MURC_ECO27</name>
<evidence type="ECO:0000255" key="1">
    <source>
        <dbReference type="HAMAP-Rule" id="MF_00046"/>
    </source>
</evidence>
<dbReference type="EC" id="6.3.2.8" evidence="1"/>
<dbReference type="EMBL" id="FM180568">
    <property type="protein sequence ID" value="CAS07644.1"/>
    <property type="molecule type" value="Genomic_DNA"/>
</dbReference>
<dbReference type="RefSeq" id="WP_001096048.1">
    <property type="nucleotide sequence ID" value="NC_011601.1"/>
</dbReference>
<dbReference type="SMR" id="B7UIE1"/>
<dbReference type="GeneID" id="75169991"/>
<dbReference type="KEGG" id="ecg:E2348C_0096"/>
<dbReference type="HOGENOM" id="CLU_028104_2_2_6"/>
<dbReference type="UniPathway" id="UPA00219"/>
<dbReference type="Proteomes" id="UP000008205">
    <property type="component" value="Chromosome"/>
</dbReference>
<dbReference type="GO" id="GO:0005737">
    <property type="term" value="C:cytoplasm"/>
    <property type="evidence" value="ECO:0007669"/>
    <property type="project" value="UniProtKB-SubCell"/>
</dbReference>
<dbReference type="GO" id="GO:0005524">
    <property type="term" value="F:ATP binding"/>
    <property type="evidence" value="ECO:0007669"/>
    <property type="project" value="UniProtKB-UniRule"/>
</dbReference>
<dbReference type="GO" id="GO:0008763">
    <property type="term" value="F:UDP-N-acetylmuramate-L-alanine ligase activity"/>
    <property type="evidence" value="ECO:0007669"/>
    <property type="project" value="UniProtKB-UniRule"/>
</dbReference>
<dbReference type="GO" id="GO:0051301">
    <property type="term" value="P:cell division"/>
    <property type="evidence" value="ECO:0007669"/>
    <property type="project" value="UniProtKB-KW"/>
</dbReference>
<dbReference type="GO" id="GO:0071555">
    <property type="term" value="P:cell wall organization"/>
    <property type="evidence" value="ECO:0007669"/>
    <property type="project" value="UniProtKB-KW"/>
</dbReference>
<dbReference type="GO" id="GO:0009252">
    <property type="term" value="P:peptidoglycan biosynthetic process"/>
    <property type="evidence" value="ECO:0007669"/>
    <property type="project" value="UniProtKB-UniRule"/>
</dbReference>
<dbReference type="GO" id="GO:0008360">
    <property type="term" value="P:regulation of cell shape"/>
    <property type="evidence" value="ECO:0007669"/>
    <property type="project" value="UniProtKB-KW"/>
</dbReference>
<dbReference type="FunFam" id="3.40.1190.10:FF:000001">
    <property type="entry name" value="UDP-N-acetylmuramate--L-alanine ligase"/>
    <property type="match status" value="1"/>
</dbReference>
<dbReference type="FunFam" id="3.40.50.720:FF:000046">
    <property type="entry name" value="UDP-N-acetylmuramate--L-alanine ligase"/>
    <property type="match status" value="1"/>
</dbReference>
<dbReference type="FunFam" id="3.90.190.20:FF:000001">
    <property type="entry name" value="UDP-N-acetylmuramate--L-alanine ligase"/>
    <property type="match status" value="1"/>
</dbReference>
<dbReference type="Gene3D" id="3.90.190.20">
    <property type="entry name" value="Mur ligase, C-terminal domain"/>
    <property type="match status" value="1"/>
</dbReference>
<dbReference type="Gene3D" id="3.40.1190.10">
    <property type="entry name" value="Mur-like, catalytic domain"/>
    <property type="match status" value="1"/>
</dbReference>
<dbReference type="Gene3D" id="3.40.50.720">
    <property type="entry name" value="NAD(P)-binding Rossmann-like Domain"/>
    <property type="match status" value="1"/>
</dbReference>
<dbReference type="HAMAP" id="MF_00046">
    <property type="entry name" value="MurC"/>
    <property type="match status" value="1"/>
</dbReference>
<dbReference type="InterPro" id="IPR036565">
    <property type="entry name" value="Mur-like_cat_sf"/>
</dbReference>
<dbReference type="InterPro" id="IPR004101">
    <property type="entry name" value="Mur_ligase_C"/>
</dbReference>
<dbReference type="InterPro" id="IPR036615">
    <property type="entry name" value="Mur_ligase_C_dom_sf"/>
</dbReference>
<dbReference type="InterPro" id="IPR013221">
    <property type="entry name" value="Mur_ligase_cen"/>
</dbReference>
<dbReference type="InterPro" id="IPR000713">
    <property type="entry name" value="Mur_ligase_N"/>
</dbReference>
<dbReference type="InterPro" id="IPR050061">
    <property type="entry name" value="MurCDEF_pg_biosynth"/>
</dbReference>
<dbReference type="InterPro" id="IPR005758">
    <property type="entry name" value="UDP-N-AcMur_Ala_ligase_MurC"/>
</dbReference>
<dbReference type="NCBIfam" id="TIGR01082">
    <property type="entry name" value="murC"/>
    <property type="match status" value="1"/>
</dbReference>
<dbReference type="PANTHER" id="PTHR43445:SF3">
    <property type="entry name" value="UDP-N-ACETYLMURAMATE--L-ALANINE LIGASE"/>
    <property type="match status" value="1"/>
</dbReference>
<dbReference type="PANTHER" id="PTHR43445">
    <property type="entry name" value="UDP-N-ACETYLMURAMATE--L-ALANINE LIGASE-RELATED"/>
    <property type="match status" value="1"/>
</dbReference>
<dbReference type="Pfam" id="PF01225">
    <property type="entry name" value="Mur_ligase"/>
    <property type="match status" value="1"/>
</dbReference>
<dbReference type="Pfam" id="PF02875">
    <property type="entry name" value="Mur_ligase_C"/>
    <property type="match status" value="1"/>
</dbReference>
<dbReference type="Pfam" id="PF08245">
    <property type="entry name" value="Mur_ligase_M"/>
    <property type="match status" value="1"/>
</dbReference>
<dbReference type="SUPFAM" id="SSF51984">
    <property type="entry name" value="MurCD N-terminal domain"/>
    <property type="match status" value="1"/>
</dbReference>
<dbReference type="SUPFAM" id="SSF53623">
    <property type="entry name" value="MurD-like peptide ligases, catalytic domain"/>
    <property type="match status" value="1"/>
</dbReference>
<dbReference type="SUPFAM" id="SSF53244">
    <property type="entry name" value="MurD-like peptide ligases, peptide-binding domain"/>
    <property type="match status" value="1"/>
</dbReference>
<protein>
    <recommendedName>
        <fullName evidence="1">UDP-N-acetylmuramate--L-alanine ligase</fullName>
        <ecNumber evidence="1">6.3.2.8</ecNumber>
    </recommendedName>
    <alternativeName>
        <fullName evidence="1">UDP-N-acetylmuramoyl-L-alanine synthetase</fullName>
    </alternativeName>
</protein>
<proteinExistence type="inferred from homology"/>
<accession>B7UIE1</accession>